<proteinExistence type="uncertain"/>
<comment type="caution">
    <text evidence="1">Product of a dubious CDS prediction.</text>
</comment>
<evidence type="ECO:0000305" key="1"/>
<organism>
    <name type="scientific">Homo sapiens</name>
    <name type="common">Human</name>
    <dbReference type="NCBI Taxonomy" id="9606"/>
    <lineage>
        <taxon>Eukaryota</taxon>
        <taxon>Metazoa</taxon>
        <taxon>Chordata</taxon>
        <taxon>Craniata</taxon>
        <taxon>Vertebrata</taxon>
        <taxon>Euteleostomi</taxon>
        <taxon>Mammalia</taxon>
        <taxon>Eutheria</taxon>
        <taxon>Euarchontoglires</taxon>
        <taxon>Primates</taxon>
        <taxon>Haplorrhini</taxon>
        <taxon>Catarrhini</taxon>
        <taxon>Hominidae</taxon>
        <taxon>Homo</taxon>
    </lineage>
</organism>
<reference key="1">
    <citation type="submission" date="2000-06" db="EMBL/GenBank/DDBJ databases">
        <title>Human acute promyelocytic leukemia cell line NB4's apoptosis related genes.</title>
        <authorList>
            <person name="Yu W.-Q."/>
            <person name="Sun B.-Z."/>
            <person name="Chai Y.-B."/>
            <person name="Zhu F."/>
            <person name="Liu X.-S."/>
            <person name="Li Z."/>
            <person name="Lu F."/>
            <person name="Yan W."/>
            <person name="Yang H."/>
            <person name="Zhao Z.-L."/>
        </authorList>
    </citation>
    <scope>NUCLEOTIDE SEQUENCE [LARGE SCALE MRNA]</scope>
    <source>
        <tissue>Promyelocytic leukemia</tissue>
    </source>
</reference>
<accession>Q9BZS9</accession>
<sequence length="49" mass="5619">MPYDQDSFSTLLGFLQASRKYSEFTLKCPICIYVPCQCFAVGFLKQSDQ</sequence>
<feature type="chain" id="PRO_0000342197" description="Putative uncharacterized protein PNAS-138">
    <location>
        <begin position="1"/>
        <end position="49"/>
    </location>
</feature>
<dbReference type="EMBL" id="AF277175">
    <property type="protein sequence ID" value="AAK07535.1"/>
    <property type="molecule type" value="mRNA"/>
</dbReference>
<dbReference type="iPTMnet" id="Q9BZS9"/>
<dbReference type="PhosphoSitePlus" id="Q9BZS9"/>
<dbReference type="BioMuta" id="PNAS-138"/>
<dbReference type="MassIVE" id="Q9BZS9"/>
<dbReference type="AGR" id="HGNC:22194"/>
<dbReference type="neXtProt" id="NX_Q9BZS9"/>
<dbReference type="InParanoid" id="Q9BZS9"/>
<dbReference type="PAN-GO" id="Q9BZS9">
    <property type="GO annotations" value="0 GO annotations based on evolutionary models"/>
</dbReference>
<dbReference type="Pharos" id="Q9BZS9">
    <property type="development level" value="Tdark"/>
</dbReference>
<dbReference type="Proteomes" id="UP000005640">
    <property type="component" value="Unplaced"/>
</dbReference>
<keyword id="KW-1185">Reference proteome</keyword>
<gene>
    <name type="ORF">PNAS-138</name>
</gene>
<protein>
    <recommendedName>
        <fullName>Putative uncharacterized protein PNAS-138</fullName>
    </recommendedName>
</protein>
<name>YG041_HUMAN</name>